<keyword id="KW-0963">Cytoplasm</keyword>
<keyword id="KW-0342">GTP-binding</keyword>
<keyword id="KW-0396">Initiation factor</keyword>
<keyword id="KW-0547">Nucleotide-binding</keyword>
<keyword id="KW-0648">Protein biosynthesis</keyword>
<keyword id="KW-1185">Reference proteome</keyword>
<evidence type="ECO:0000250" key="1"/>
<evidence type="ECO:0000255" key="2">
    <source>
        <dbReference type="HAMAP-Rule" id="MF_00100"/>
    </source>
</evidence>
<evidence type="ECO:0000256" key="3">
    <source>
        <dbReference type="SAM" id="MobiDB-lite"/>
    </source>
</evidence>
<protein>
    <recommendedName>
        <fullName evidence="2">Translation initiation factor IF-2</fullName>
    </recommendedName>
</protein>
<feature type="chain" id="PRO_0000137177" description="Translation initiation factor IF-2">
    <location>
        <begin position="1"/>
        <end position="902"/>
    </location>
</feature>
<feature type="domain" description="tr-type G">
    <location>
        <begin position="398"/>
        <end position="567"/>
    </location>
</feature>
<feature type="region of interest" description="Disordered" evidence="3">
    <location>
        <begin position="1"/>
        <end position="276"/>
    </location>
</feature>
<feature type="region of interest" description="G1" evidence="1">
    <location>
        <begin position="407"/>
        <end position="414"/>
    </location>
</feature>
<feature type="region of interest" description="G2" evidence="1">
    <location>
        <begin position="432"/>
        <end position="436"/>
    </location>
</feature>
<feature type="region of interest" description="G3" evidence="1">
    <location>
        <begin position="455"/>
        <end position="458"/>
    </location>
</feature>
<feature type="region of interest" description="G4" evidence="1">
    <location>
        <begin position="509"/>
        <end position="512"/>
    </location>
</feature>
<feature type="region of interest" description="G5" evidence="1">
    <location>
        <begin position="545"/>
        <end position="547"/>
    </location>
</feature>
<feature type="compositionally biased region" description="Basic and acidic residues" evidence="3">
    <location>
        <begin position="1"/>
        <end position="12"/>
    </location>
</feature>
<feature type="compositionally biased region" description="Basic and acidic residues" evidence="3">
    <location>
        <begin position="43"/>
        <end position="60"/>
    </location>
</feature>
<feature type="compositionally biased region" description="Pro residues" evidence="3">
    <location>
        <begin position="69"/>
        <end position="84"/>
    </location>
</feature>
<feature type="compositionally biased region" description="Basic and acidic residues" evidence="3">
    <location>
        <begin position="111"/>
        <end position="174"/>
    </location>
</feature>
<feature type="compositionally biased region" description="Low complexity" evidence="3">
    <location>
        <begin position="181"/>
        <end position="190"/>
    </location>
</feature>
<feature type="compositionally biased region" description="Low complexity" evidence="3">
    <location>
        <begin position="198"/>
        <end position="237"/>
    </location>
</feature>
<feature type="binding site" evidence="2">
    <location>
        <begin position="407"/>
        <end position="414"/>
    </location>
    <ligand>
        <name>GTP</name>
        <dbReference type="ChEBI" id="CHEBI:37565"/>
    </ligand>
</feature>
<feature type="binding site" evidence="2">
    <location>
        <begin position="455"/>
        <end position="459"/>
    </location>
    <ligand>
        <name>GTP</name>
        <dbReference type="ChEBI" id="CHEBI:37565"/>
    </ligand>
</feature>
<feature type="binding site" evidence="2">
    <location>
        <begin position="509"/>
        <end position="512"/>
    </location>
    <ligand>
        <name>GTP</name>
        <dbReference type="ChEBI" id="CHEBI:37565"/>
    </ligand>
</feature>
<proteinExistence type="inferred from homology"/>
<comment type="function">
    <text evidence="2">One of the essential components for the initiation of protein synthesis. Protects formylmethionyl-tRNA from spontaneous hydrolysis and promotes its binding to the 30S ribosomal subunits. Also involved in the hydrolysis of GTP during the formation of the 70S ribosomal complex.</text>
</comment>
<comment type="subcellular location">
    <subcellularLocation>
        <location evidence="2">Cytoplasm</location>
    </subcellularLocation>
</comment>
<comment type="similarity">
    <text evidence="2">Belongs to the TRAFAC class translation factor GTPase superfamily. Classic translation factor GTPase family. IF-2 subfamily.</text>
</comment>
<dbReference type="EMBL" id="BA000040">
    <property type="protein sequence ID" value="BAC46048.1"/>
    <property type="molecule type" value="Genomic_DNA"/>
</dbReference>
<dbReference type="RefSeq" id="NP_767423.1">
    <property type="nucleotide sequence ID" value="NC_004463.1"/>
</dbReference>
<dbReference type="RefSeq" id="WP_011083605.1">
    <property type="nucleotide sequence ID" value="NC_004463.1"/>
</dbReference>
<dbReference type="SMR" id="Q89WA9"/>
<dbReference type="FunCoup" id="Q89WA9">
    <property type="interactions" value="770"/>
</dbReference>
<dbReference type="STRING" id="224911.AAV28_00765"/>
<dbReference type="EnsemblBacteria" id="BAC46048">
    <property type="protein sequence ID" value="BAC46048"/>
    <property type="gene ID" value="BAC46048"/>
</dbReference>
<dbReference type="GeneID" id="46488059"/>
<dbReference type="KEGG" id="bja:bll0783"/>
<dbReference type="PATRIC" id="fig|224911.44.peg.158"/>
<dbReference type="eggNOG" id="COG0532">
    <property type="taxonomic scope" value="Bacteria"/>
</dbReference>
<dbReference type="HOGENOM" id="CLU_006301_10_0_5"/>
<dbReference type="InParanoid" id="Q89WA9"/>
<dbReference type="OrthoDB" id="9811804at2"/>
<dbReference type="PhylomeDB" id="Q89WA9"/>
<dbReference type="Proteomes" id="UP000002526">
    <property type="component" value="Chromosome"/>
</dbReference>
<dbReference type="GO" id="GO:0005737">
    <property type="term" value="C:cytoplasm"/>
    <property type="evidence" value="ECO:0000318"/>
    <property type="project" value="GO_Central"/>
</dbReference>
<dbReference type="GO" id="GO:0005829">
    <property type="term" value="C:cytosol"/>
    <property type="evidence" value="ECO:0000318"/>
    <property type="project" value="GO_Central"/>
</dbReference>
<dbReference type="GO" id="GO:0005525">
    <property type="term" value="F:GTP binding"/>
    <property type="evidence" value="ECO:0007669"/>
    <property type="project" value="UniProtKB-KW"/>
</dbReference>
<dbReference type="GO" id="GO:0003924">
    <property type="term" value="F:GTPase activity"/>
    <property type="evidence" value="ECO:0007669"/>
    <property type="project" value="UniProtKB-UniRule"/>
</dbReference>
<dbReference type="GO" id="GO:0097216">
    <property type="term" value="F:guanosine tetraphosphate binding"/>
    <property type="evidence" value="ECO:0007669"/>
    <property type="project" value="UniProtKB-ARBA"/>
</dbReference>
<dbReference type="GO" id="GO:0003743">
    <property type="term" value="F:translation initiation factor activity"/>
    <property type="evidence" value="ECO:0000318"/>
    <property type="project" value="GO_Central"/>
</dbReference>
<dbReference type="GO" id="GO:0006413">
    <property type="term" value="P:translational initiation"/>
    <property type="evidence" value="ECO:0000318"/>
    <property type="project" value="GO_Central"/>
</dbReference>
<dbReference type="CDD" id="cd01887">
    <property type="entry name" value="IF2_eIF5B"/>
    <property type="match status" value="1"/>
</dbReference>
<dbReference type="CDD" id="cd03702">
    <property type="entry name" value="IF2_mtIF2_II"/>
    <property type="match status" value="1"/>
</dbReference>
<dbReference type="CDD" id="cd03692">
    <property type="entry name" value="mtIF2_IVc"/>
    <property type="match status" value="1"/>
</dbReference>
<dbReference type="FunFam" id="2.40.30.10:FF:000007">
    <property type="entry name" value="Translation initiation factor IF-2"/>
    <property type="match status" value="1"/>
</dbReference>
<dbReference type="FunFam" id="2.40.30.10:FF:000008">
    <property type="entry name" value="Translation initiation factor IF-2"/>
    <property type="match status" value="1"/>
</dbReference>
<dbReference type="FunFam" id="3.40.50.10050:FF:000001">
    <property type="entry name" value="Translation initiation factor IF-2"/>
    <property type="match status" value="1"/>
</dbReference>
<dbReference type="FunFam" id="3.40.50.300:FF:000019">
    <property type="entry name" value="Translation initiation factor IF-2"/>
    <property type="match status" value="1"/>
</dbReference>
<dbReference type="Gene3D" id="3.40.50.300">
    <property type="entry name" value="P-loop containing nucleotide triphosphate hydrolases"/>
    <property type="match status" value="1"/>
</dbReference>
<dbReference type="Gene3D" id="2.40.30.10">
    <property type="entry name" value="Translation factors"/>
    <property type="match status" value="2"/>
</dbReference>
<dbReference type="Gene3D" id="3.40.50.10050">
    <property type="entry name" value="Translation initiation factor IF- 2, domain 3"/>
    <property type="match status" value="1"/>
</dbReference>
<dbReference type="HAMAP" id="MF_00100_B">
    <property type="entry name" value="IF_2_B"/>
    <property type="match status" value="1"/>
</dbReference>
<dbReference type="InterPro" id="IPR053905">
    <property type="entry name" value="EF-G-like_DII"/>
</dbReference>
<dbReference type="InterPro" id="IPR004161">
    <property type="entry name" value="EFTu-like_2"/>
</dbReference>
<dbReference type="InterPro" id="IPR013575">
    <property type="entry name" value="IF2_assoc_dom_bac"/>
</dbReference>
<dbReference type="InterPro" id="IPR044145">
    <property type="entry name" value="IF2_II"/>
</dbReference>
<dbReference type="InterPro" id="IPR006847">
    <property type="entry name" value="IF2_N"/>
</dbReference>
<dbReference type="InterPro" id="IPR027417">
    <property type="entry name" value="P-loop_NTPase"/>
</dbReference>
<dbReference type="InterPro" id="IPR005225">
    <property type="entry name" value="Small_GTP-bd"/>
</dbReference>
<dbReference type="InterPro" id="IPR000795">
    <property type="entry name" value="T_Tr_GTP-bd_dom"/>
</dbReference>
<dbReference type="InterPro" id="IPR000178">
    <property type="entry name" value="TF_IF2_bacterial-like"/>
</dbReference>
<dbReference type="InterPro" id="IPR015760">
    <property type="entry name" value="TIF_IF2"/>
</dbReference>
<dbReference type="InterPro" id="IPR023115">
    <property type="entry name" value="TIF_IF2_dom3"/>
</dbReference>
<dbReference type="InterPro" id="IPR036925">
    <property type="entry name" value="TIF_IF2_dom3_sf"/>
</dbReference>
<dbReference type="InterPro" id="IPR009000">
    <property type="entry name" value="Transl_B-barrel_sf"/>
</dbReference>
<dbReference type="NCBIfam" id="TIGR00487">
    <property type="entry name" value="IF-2"/>
    <property type="match status" value="1"/>
</dbReference>
<dbReference type="NCBIfam" id="TIGR00231">
    <property type="entry name" value="small_GTP"/>
    <property type="match status" value="1"/>
</dbReference>
<dbReference type="PANTHER" id="PTHR43381:SF5">
    <property type="entry name" value="TR-TYPE G DOMAIN-CONTAINING PROTEIN"/>
    <property type="match status" value="1"/>
</dbReference>
<dbReference type="PANTHER" id="PTHR43381">
    <property type="entry name" value="TRANSLATION INITIATION FACTOR IF-2-RELATED"/>
    <property type="match status" value="1"/>
</dbReference>
<dbReference type="Pfam" id="PF22042">
    <property type="entry name" value="EF-G_D2"/>
    <property type="match status" value="1"/>
</dbReference>
<dbReference type="Pfam" id="PF00009">
    <property type="entry name" value="GTP_EFTU"/>
    <property type="match status" value="1"/>
</dbReference>
<dbReference type="Pfam" id="PF03144">
    <property type="entry name" value="GTP_EFTU_D2"/>
    <property type="match status" value="1"/>
</dbReference>
<dbReference type="Pfam" id="PF11987">
    <property type="entry name" value="IF-2"/>
    <property type="match status" value="1"/>
</dbReference>
<dbReference type="Pfam" id="PF08364">
    <property type="entry name" value="IF2_assoc"/>
    <property type="match status" value="1"/>
</dbReference>
<dbReference type="Pfam" id="PF04760">
    <property type="entry name" value="IF2_N"/>
    <property type="match status" value="1"/>
</dbReference>
<dbReference type="SUPFAM" id="SSF52156">
    <property type="entry name" value="Initiation factor IF2/eIF5b, domain 3"/>
    <property type="match status" value="1"/>
</dbReference>
<dbReference type="SUPFAM" id="SSF52540">
    <property type="entry name" value="P-loop containing nucleoside triphosphate hydrolases"/>
    <property type="match status" value="1"/>
</dbReference>
<dbReference type="SUPFAM" id="SSF50447">
    <property type="entry name" value="Translation proteins"/>
    <property type="match status" value="2"/>
</dbReference>
<dbReference type="PROSITE" id="PS51722">
    <property type="entry name" value="G_TR_2"/>
    <property type="match status" value="1"/>
</dbReference>
<dbReference type="PROSITE" id="PS01176">
    <property type="entry name" value="IF2"/>
    <property type="match status" value="1"/>
</dbReference>
<accession>Q89WA9</accession>
<reference key="1">
    <citation type="journal article" date="2002" name="DNA Res.">
        <title>Complete genomic sequence of nitrogen-fixing symbiotic bacterium Bradyrhizobium japonicum USDA110.</title>
        <authorList>
            <person name="Kaneko T."/>
            <person name="Nakamura Y."/>
            <person name="Sato S."/>
            <person name="Minamisawa K."/>
            <person name="Uchiumi T."/>
            <person name="Sasamoto S."/>
            <person name="Watanabe A."/>
            <person name="Idesawa K."/>
            <person name="Iriguchi M."/>
            <person name="Kawashima K."/>
            <person name="Kohara M."/>
            <person name="Matsumoto M."/>
            <person name="Shimpo S."/>
            <person name="Tsuruoka H."/>
            <person name="Wada T."/>
            <person name="Yamada M."/>
            <person name="Tabata S."/>
        </authorList>
    </citation>
    <scope>NUCLEOTIDE SEQUENCE [LARGE SCALE GENOMIC DNA]</scope>
    <source>
        <strain>JCM 10833 / BCRC 13528 / IAM 13628 / NBRC 14792 / USDA 110</strain>
    </source>
</reference>
<name>IF2_BRADU</name>
<organism>
    <name type="scientific">Bradyrhizobium diazoefficiens (strain JCM 10833 / BCRC 13528 / IAM 13628 / NBRC 14792 / USDA 110)</name>
    <dbReference type="NCBI Taxonomy" id="224911"/>
    <lineage>
        <taxon>Bacteria</taxon>
        <taxon>Pseudomonadati</taxon>
        <taxon>Pseudomonadota</taxon>
        <taxon>Alphaproteobacteria</taxon>
        <taxon>Hyphomicrobiales</taxon>
        <taxon>Nitrobacteraceae</taxon>
        <taxon>Bradyrhizobium</taxon>
    </lineage>
</organism>
<sequence length="902" mass="96917">MVDTKTPGDKKLSVPSKTLSLKPRVETGTVRQSFSHGRSKQVVVEKRGKRRIGDGPEPHAPEVTAKPAPAAPAPSRPAPPPAPPRNAGSGVVLRTLTEDERSARASALADAKLREVEERRQAEEEAQRRAVREAAERAEREAAEARRKAEDERHRHEDEAKRKAETEAKKRFGEGEQPASAARPATAAPAAPAPRPGAPAARPGTTTTRPGTTTARPATTTAQRPGAPAGRGPAVAAEPDEDEAPRQIRRGPGGAARPAPPPKTTHKPGPQKERGRLTVVTALNADEVRERSIASFRRRTQRLKGHASNEPKEKLIREVIIPEAITIQELANRMAERAVDVIRMLMKQGAMHKITDVIDADTAQLIAEELGHTVKRVAASDVEEGLFDQVDDSTDTETRSPVVTVMGHVDHGKTSLLDALRHANVVSGEAGGITQHIGAYQVVSPESGKKITFIDTPGHAAFTAMRARGAKVTDIVVLVVAADDGVMPQTVEAINHAKAARVPIIVAINKIDKPDAKPERVRTELLQHEVQVESFGGDVVDVEVSAKNKTNLDKLLEMIALQADILDLKTNSERPAEGTVIEAKLDRGRGPVATVLVQRGTLRVGDIIVAGAEMGRVRALISDQGETVQEAGPSVPVEVLGFNGPPEAGDRLAVVENEARARQVTSYRAHQKRENAAASISGMRGSLEQMMSQLKTAGRKEFPLIIKADVQGSLEAILGSLEKLGTDEVAARILHAGVGGISESDVTLAEGFNAAIIGFSVRANKEAAAAAKRNGIEIRYYNIIYDLVDDVKKAMSGLLAPTLRETMLGNAAILEIFNISKVGKVAGCRVTDGTVERGANVRLIRDNVVVHEGKLSTLKRFKDEVKEVQSGQECGMAFENYHDMRAGDVIECYRVETIQRSL</sequence>
<gene>
    <name evidence="2" type="primary">infB</name>
    <name type="ordered locus">bll0783</name>
</gene>